<gene>
    <name evidence="1" type="primary">dapA</name>
    <name type="ordered locus">c3006</name>
</gene>
<dbReference type="EC" id="4.3.3.7" evidence="1"/>
<dbReference type="EMBL" id="AE014075">
    <property type="protein sequence ID" value="AAN81456.1"/>
    <property type="status" value="ALT_INIT"/>
    <property type="molecule type" value="Genomic_DNA"/>
</dbReference>
<dbReference type="RefSeq" id="WP_001295469.1">
    <property type="nucleotide sequence ID" value="NZ_CP051263.1"/>
</dbReference>
<dbReference type="SMR" id="P63943"/>
<dbReference type="STRING" id="199310.c3006"/>
<dbReference type="GeneID" id="93774660"/>
<dbReference type="KEGG" id="ecc:c3006"/>
<dbReference type="eggNOG" id="COG0329">
    <property type="taxonomic scope" value="Bacteria"/>
</dbReference>
<dbReference type="HOGENOM" id="CLU_049343_7_1_6"/>
<dbReference type="SABIO-RK" id="P63943"/>
<dbReference type="UniPathway" id="UPA00034">
    <property type="reaction ID" value="UER00017"/>
</dbReference>
<dbReference type="Proteomes" id="UP000001410">
    <property type="component" value="Chromosome"/>
</dbReference>
<dbReference type="GO" id="GO:0005829">
    <property type="term" value="C:cytosol"/>
    <property type="evidence" value="ECO:0007669"/>
    <property type="project" value="TreeGrafter"/>
</dbReference>
<dbReference type="GO" id="GO:0008840">
    <property type="term" value="F:4-hydroxy-tetrahydrodipicolinate synthase activity"/>
    <property type="evidence" value="ECO:0007669"/>
    <property type="project" value="UniProtKB-UniRule"/>
</dbReference>
<dbReference type="GO" id="GO:0019877">
    <property type="term" value="P:diaminopimelate biosynthetic process"/>
    <property type="evidence" value="ECO:0007669"/>
    <property type="project" value="UniProtKB-UniRule"/>
</dbReference>
<dbReference type="GO" id="GO:0009089">
    <property type="term" value="P:lysine biosynthetic process via diaminopimelate"/>
    <property type="evidence" value="ECO:0007669"/>
    <property type="project" value="UniProtKB-UniRule"/>
</dbReference>
<dbReference type="CDD" id="cd00950">
    <property type="entry name" value="DHDPS"/>
    <property type="match status" value="1"/>
</dbReference>
<dbReference type="FunFam" id="3.20.20.70:FF:000046">
    <property type="entry name" value="4-hydroxy-tetrahydrodipicolinate synthase"/>
    <property type="match status" value="1"/>
</dbReference>
<dbReference type="Gene3D" id="3.20.20.70">
    <property type="entry name" value="Aldolase class I"/>
    <property type="match status" value="1"/>
</dbReference>
<dbReference type="HAMAP" id="MF_00418">
    <property type="entry name" value="DapA"/>
    <property type="match status" value="1"/>
</dbReference>
<dbReference type="InterPro" id="IPR013785">
    <property type="entry name" value="Aldolase_TIM"/>
</dbReference>
<dbReference type="InterPro" id="IPR005263">
    <property type="entry name" value="DapA"/>
</dbReference>
<dbReference type="InterPro" id="IPR002220">
    <property type="entry name" value="DapA-like"/>
</dbReference>
<dbReference type="InterPro" id="IPR020625">
    <property type="entry name" value="Schiff_base-form_aldolases_AS"/>
</dbReference>
<dbReference type="InterPro" id="IPR020624">
    <property type="entry name" value="Schiff_base-form_aldolases_CS"/>
</dbReference>
<dbReference type="NCBIfam" id="TIGR00674">
    <property type="entry name" value="dapA"/>
    <property type="match status" value="1"/>
</dbReference>
<dbReference type="PANTHER" id="PTHR12128:SF66">
    <property type="entry name" value="4-HYDROXY-2-OXOGLUTARATE ALDOLASE, MITOCHONDRIAL"/>
    <property type="match status" value="1"/>
</dbReference>
<dbReference type="PANTHER" id="PTHR12128">
    <property type="entry name" value="DIHYDRODIPICOLINATE SYNTHASE"/>
    <property type="match status" value="1"/>
</dbReference>
<dbReference type="Pfam" id="PF00701">
    <property type="entry name" value="DHDPS"/>
    <property type="match status" value="1"/>
</dbReference>
<dbReference type="PIRSF" id="PIRSF001365">
    <property type="entry name" value="DHDPS"/>
    <property type="match status" value="1"/>
</dbReference>
<dbReference type="PRINTS" id="PR00146">
    <property type="entry name" value="DHPICSNTHASE"/>
</dbReference>
<dbReference type="SMART" id="SM01130">
    <property type="entry name" value="DHDPS"/>
    <property type="match status" value="1"/>
</dbReference>
<dbReference type="SUPFAM" id="SSF51569">
    <property type="entry name" value="Aldolase"/>
    <property type="match status" value="1"/>
</dbReference>
<dbReference type="PROSITE" id="PS00665">
    <property type="entry name" value="DHDPS_1"/>
    <property type="match status" value="1"/>
</dbReference>
<dbReference type="PROSITE" id="PS00666">
    <property type="entry name" value="DHDPS_2"/>
    <property type="match status" value="1"/>
</dbReference>
<keyword id="KW-0028">Amino-acid biosynthesis</keyword>
<keyword id="KW-0963">Cytoplasm</keyword>
<keyword id="KW-0220">Diaminopimelate biosynthesis</keyword>
<keyword id="KW-0456">Lyase</keyword>
<keyword id="KW-0457">Lysine biosynthesis</keyword>
<keyword id="KW-1185">Reference proteome</keyword>
<keyword id="KW-0704">Schiff base</keyword>
<accession>P63943</accession>
<accession>P58206</accession>
<comment type="function">
    <text evidence="1">Catalyzes the condensation of (S)-aspartate-beta-semialdehyde [(S)-ASA] and pyruvate to 4-hydroxy-tetrahydrodipicolinate (HTPA).</text>
</comment>
<comment type="catalytic activity">
    <reaction evidence="1">
        <text>L-aspartate 4-semialdehyde + pyruvate = (2S,4S)-4-hydroxy-2,3,4,5-tetrahydrodipicolinate + H2O + H(+)</text>
        <dbReference type="Rhea" id="RHEA:34171"/>
        <dbReference type="ChEBI" id="CHEBI:15361"/>
        <dbReference type="ChEBI" id="CHEBI:15377"/>
        <dbReference type="ChEBI" id="CHEBI:15378"/>
        <dbReference type="ChEBI" id="CHEBI:67139"/>
        <dbReference type="ChEBI" id="CHEBI:537519"/>
        <dbReference type="EC" id="4.3.3.7"/>
    </reaction>
</comment>
<comment type="pathway">
    <text evidence="1">Amino-acid biosynthesis; L-lysine biosynthesis via DAP pathway; (S)-tetrahydrodipicolinate from L-aspartate: step 3/4.</text>
</comment>
<comment type="subunit">
    <text evidence="1">Homotetramer; dimer of dimers.</text>
</comment>
<comment type="subcellular location">
    <subcellularLocation>
        <location evidence="1">Cytoplasm</location>
    </subcellularLocation>
</comment>
<comment type="similarity">
    <text evidence="1">Belongs to the DapA family.</text>
</comment>
<comment type="caution">
    <text evidence="2">Was originally thought to be a dihydrodipicolinate synthase (DHDPS), catalyzing the condensation of (S)-aspartate-beta-semialdehyde [(S)-ASA] and pyruvate to dihydrodipicolinate (DHDP). However, it was shown in E.coli that the product of the enzymatic reaction is not dihydrodipicolinate but in fact (4S)-4-hydroxy-2,3,4,5-tetrahydro-(2S)-dipicolinic acid (HTPA), and that the consecutive dehydration reaction leading to DHDP is not spontaneous but catalyzed by DapB.</text>
</comment>
<comment type="sequence caution" evidence="2">
    <conflict type="erroneous initiation">
        <sequence resource="EMBL-CDS" id="AAN81456"/>
    </conflict>
</comment>
<organism>
    <name type="scientific">Escherichia coli O6:H1 (strain CFT073 / ATCC 700928 / UPEC)</name>
    <dbReference type="NCBI Taxonomy" id="199310"/>
    <lineage>
        <taxon>Bacteria</taxon>
        <taxon>Pseudomonadati</taxon>
        <taxon>Pseudomonadota</taxon>
        <taxon>Gammaproteobacteria</taxon>
        <taxon>Enterobacterales</taxon>
        <taxon>Enterobacteriaceae</taxon>
        <taxon>Escherichia</taxon>
    </lineage>
</organism>
<sequence>MFTGSIVAIVTPMDEKGNVCRASLKKLIDYHVASGTSAIVSVGTTGESATLNHDEHADVVMMTLELADGRIPVIAGTGANATAEAISLTQRFNDSGIVGCLTVTPYYNRPSQEGLYQHFKAIAEHTDLPQILYNVPSRTGCDLLPETVGRLAKVKNIIGIKEATGNLTRVNQIKELVSDDFVLLSGDDASALDFMQLGGHGVISVTANVAARDMAQMCKLAAEGHFAEARVINQRLMPLHNKLFVEPNPIPVKWACKELGLVATDTLRLPMTPITDSGRETVRAALKHAGLL</sequence>
<protein>
    <recommendedName>
        <fullName evidence="1">4-hydroxy-tetrahydrodipicolinate synthase</fullName>
        <shortName evidence="1">HTPA synthase</shortName>
        <ecNumber evidence="1">4.3.3.7</ecNumber>
    </recommendedName>
</protein>
<name>DAPA_ECOL6</name>
<proteinExistence type="inferred from homology"/>
<feature type="chain" id="PRO_0000103111" description="4-hydroxy-tetrahydrodipicolinate synthase">
    <location>
        <begin position="1"/>
        <end position="292"/>
    </location>
</feature>
<feature type="active site" description="Proton donor/acceptor" evidence="1">
    <location>
        <position position="133"/>
    </location>
</feature>
<feature type="active site" description="Schiff-base intermediate with substrate" evidence="1">
    <location>
        <position position="161"/>
    </location>
</feature>
<feature type="binding site" evidence="1">
    <location>
        <position position="45"/>
    </location>
    <ligand>
        <name>pyruvate</name>
        <dbReference type="ChEBI" id="CHEBI:15361"/>
    </ligand>
</feature>
<feature type="binding site" evidence="1">
    <location>
        <position position="203"/>
    </location>
    <ligand>
        <name>pyruvate</name>
        <dbReference type="ChEBI" id="CHEBI:15361"/>
    </ligand>
</feature>
<feature type="site" description="Part of a proton relay during catalysis" evidence="1">
    <location>
        <position position="44"/>
    </location>
</feature>
<feature type="site" description="Part of a proton relay during catalysis" evidence="1">
    <location>
        <position position="107"/>
    </location>
</feature>
<evidence type="ECO:0000255" key="1">
    <source>
        <dbReference type="HAMAP-Rule" id="MF_00418"/>
    </source>
</evidence>
<evidence type="ECO:0000305" key="2"/>
<reference key="1">
    <citation type="journal article" date="2002" name="Proc. Natl. Acad. Sci. U.S.A.">
        <title>Extensive mosaic structure revealed by the complete genome sequence of uropathogenic Escherichia coli.</title>
        <authorList>
            <person name="Welch R.A."/>
            <person name="Burland V."/>
            <person name="Plunkett G. III"/>
            <person name="Redford P."/>
            <person name="Roesch P."/>
            <person name="Rasko D."/>
            <person name="Buckles E.L."/>
            <person name="Liou S.-R."/>
            <person name="Boutin A."/>
            <person name="Hackett J."/>
            <person name="Stroud D."/>
            <person name="Mayhew G.F."/>
            <person name="Rose D.J."/>
            <person name="Zhou S."/>
            <person name="Schwartz D.C."/>
            <person name="Perna N.T."/>
            <person name="Mobley H.L.T."/>
            <person name="Donnenberg M.S."/>
            <person name="Blattner F.R."/>
        </authorList>
    </citation>
    <scope>NUCLEOTIDE SEQUENCE [LARGE SCALE GENOMIC DNA]</scope>
    <source>
        <strain>CFT073 / ATCC 700928 / UPEC</strain>
    </source>
</reference>